<sequence>MRTFSPKPSDIQRQWHVIDASDVVLGRLASRVATLLRGKHKPYYAPHVDTGDYVIVVNADKVVLTGKKLEQKRAYRHSGYPGGLRSIPYSELMAKNPARAVEKAVKGMLPKNSLGRRMAKKLKVYAGPEHPHQAQKPVPYEITKIKQPA</sequence>
<gene>
    <name evidence="1" type="primary">rplM</name>
    <name type="ordered locus">Tfu_2614</name>
</gene>
<feature type="chain" id="PRO_0000261815" description="Large ribosomal subunit protein uL13">
    <location>
        <begin position="1"/>
        <end position="149"/>
    </location>
</feature>
<evidence type="ECO:0000255" key="1">
    <source>
        <dbReference type="HAMAP-Rule" id="MF_01366"/>
    </source>
</evidence>
<evidence type="ECO:0000305" key="2"/>
<dbReference type="EMBL" id="CP000088">
    <property type="protein sequence ID" value="AAZ56647.1"/>
    <property type="molecule type" value="Genomic_DNA"/>
</dbReference>
<dbReference type="RefSeq" id="WP_011293037.1">
    <property type="nucleotide sequence ID" value="NC_007333.1"/>
</dbReference>
<dbReference type="SMR" id="Q47LM5"/>
<dbReference type="STRING" id="269800.Tfu_2614"/>
<dbReference type="KEGG" id="tfu:Tfu_2614"/>
<dbReference type="eggNOG" id="COG0102">
    <property type="taxonomic scope" value="Bacteria"/>
</dbReference>
<dbReference type="HOGENOM" id="CLU_082184_2_2_11"/>
<dbReference type="OrthoDB" id="9801330at2"/>
<dbReference type="GO" id="GO:0022625">
    <property type="term" value="C:cytosolic large ribosomal subunit"/>
    <property type="evidence" value="ECO:0007669"/>
    <property type="project" value="TreeGrafter"/>
</dbReference>
<dbReference type="GO" id="GO:0003729">
    <property type="term" value="F:mRNA binding"/>
    <property type="evidence" value="ECO:0007669"/>
    <property type="project" value="TreeGrafter"/>
</dbReference>
<dbReference type="GO" id="GO:0003735">
    <property type="term" value="F:structural constituent of ribosome"/>
    <property type="evidence" value="ECO:0007669"/>
    <property type="project" value="InterPro"/>
</dbReference>
<dbReference type="GO" id="GO:0017148">
    <property type="term" value="P:negative regulation of translation"/>
    <property type="evidence" value="ECO:0007669"/>
    <property type="project" value="TreeGrafter"/>
</dbReference>
<dbReference type="GO" id="GO:0006412">
    <property type="term" value="P:translation"/>
    <property type="evidence" value="ECO:0007669"/>
    <property type="project" value="UniProtKB-UniRule"/>
</dbReference>
<dbReference type="CDD" id="cd00392">
    <property type="entry name" value="Ribosomal_L13"/>
    <property type="match status" value="1"/>
</dbReference>
<dbReference type="FunFam" id="3.90.1180.10:FF:000001">
    <property type="entry name" value="50S ribosomal protein L13"/>
    <property type="match status" value="1"/>
</dbReference>
<dbReference type="Gene3D" id="3.90.1180.10">
    <property type="entry name" value="Ribosomal protein L13"/>
    <property type="match status" value="1"/>
</dbReference>
<dbReference type="HAMAP" id="MF_01366">
    <property type="entry name" value="Ribosomal_uL13"/>
    <property type="match status" value="1"/>
</dbReference>
<dbReference type="InterPro" id="IPR005822">
    <property type="entry name" value="Ribosomal_uL13"/>
</dbReference>
<dbReference type="InterPro" id="IPR005823">
    <property type="entry name" value="Ribosomal_uL13_bac-type"/>
</dbReference>
<dbReference type="InterPro" id="IPR023563">
    <property type="entry name" value="Ribosomal_uL13_CS"/>
</dbReference>
<dbReference type="InterPro" id="IPR036899">
    <property type="entry name" value="Ribosomal_uL13_sf"/>
</dbReference>
<dbReference type="NCBIfam" id="TIGR01066">
    <property type="entry name" value="rplM_bact"/>
    <property type="match status" value="1"/>
</dbReference>
<dbReference type="PANTHER" id="PTHR11545:SF2">
    <property type="entry name" value="LARGE RIBOSOMAL SUBUNIT PROTEIN UL13M"/>
    <property type="match status" value="1"/>
</dbReference>
<dbReference type="PANTHER" id="PTHR11545">
    <property type="entry name" value="RIBOSOMAL PROTEIN L13"/>
    <property type="match status" value="1"/>
</dbReference>
<dbReference type="Pfam" id="PF00572">
    <property type="entry name" value="Ribosomal_L13"/>
    <property type="match status" value="1"/>
</dbReference>
<dbReference type="PIRSF" id="PIRSF002181">
    <property type="entry name" value="Ribosomal_L13"/>
    <property type="match status" value="1"/>
</dbReference>
<dbReference type="SUPFAM" id="SSF52161">
    <property type="entry name" value="Ribosomal protein L13"/>
    <property type="match status" value="1"/>
</dbReference>
<dbReference type="PROSITE" id="PS00783">
    <property type="entry name" value="RIBOSOMAL_L13"/>
    <property type="match status" value="1"/>
</dbReference>
<reference key="1">
    <citation type="journal article" date="2007" name="J. Bacteriol.">
        <title>Genome sequence and analysis of the soil cellulolytic actinomycete Thermobifida fusca YX.</title>
        <authorList>
            <person name="Lykidis A."/>
            <person name="Mavromatis K."/>
            <person name="Ivanova N."/>
            <person name="Anderson I."/>
            <person name="Land M."/>
            <person name="DiBartolo G."/>
            <person name="Martinez M."/>
            <person name="Lapidus A."/>
            <person name="Lucas S."/>
            <person name="Copeland A."/>
            <person name="Richardson P."/>
            <person name="Wilson D.B."/>
            <person name="Kyrpides N."/>
        </authorList>
    </citation>
    <scope>NUCLEOTIDE SEQUENCE [LARGE SCALE GENOMIC DNA]</scope>
    <source>
        <strain>YX</strain>
    </source>
</reference>
<proteinExistence type="inferred from homology"/>
<organism>
    <name type="scientific">Thermobifida fusca (strain YX)</name>
    <dbReference type="NCBI Taxonomy" id="269800"/>
    <lineage>
        <taxon>Bacteria</taxon>
        <taxon>Bacillati</taxon>
        <taxon>Actinomycetota</taxon>
        <taxon>Actinomycetes</taxon>
        <taxon>Streptosporangiales</taxon>
        <taxon>Nocardiopsidaceae</taxon>
        <taxon>Thermobifida</taxon>
    </lineage>
</organism>
<protein>
    <recommendedName>
        <fullName evidence="1">Large ribosomal subunit protein uL13</fullName>
    </recommendedName>
    <alternativeName>
        <fullName evidence="2">50S ribosomal protein L13</fullName>
    </alternativeName>
</protein>
<comment type="function">
    <text evidence="1">This protein is one of the early assembly proteins of the 50S ribosomal subunit, although it is not seen to bind rRNA by itself. It is important during the early stages of 50S assembly.</text>
</comment>
<comment type="subunit">
    <text evidence="1">Part of the 50S ribosomal subunit.</text>
</comment>
<comment type="similarity">
    <text evidence="1">Belongs to the universal ribosomal protein uL13 family.</text>
</comment>
<name>RL13_THEFY</name>
<accession>Q47LM5</accession>
<keyword id="KW-0687">Ribonucleoprotein</keyword>
<keyword id="KW-0689">Ribosomal protein</keyword>